<gene>
    <name evidence="1" type="primary">fadA</name>
    <name type="ordered locus">KPN78578_42830</name>
    <name type="ORF">KPN_04339</name>
</gene>
<comment type="function">
    <text evidence="1">Catalyzes the final step of fatty acid oxidation in which acetyl-CoA is released and the CoA ester of a fatty acid two carbons shorter is formed.</text>
</comment>
<comment type="catalytic activity">
    <reaction evidence="1">
        <text>an acyl-CoA + acetyl-CoA = a 3-oxoacyl-CoA + CoA</text>
        <dbReference type="Rhea" id="RHEA:21564"/>
        <dbReference type="ChEBI" id="CHEBI:57287"/>
        <dbReference type="ChEBI" id="CHEBI:57288"/>
        <dbReference type="ChEBI" id="CHEBI:58342"/>
        <dbReference type="ChEBI" id="CHEBI:90726"/>
        <dbReference type="EC" id="2.3.1.16"/>
    </reaction>
</comment>
<comment type="pathway">
    <text evidence="1">Lipid metabolism; fatty acid beta-oxidation.</text>
</comment>
<comment type="subunit">
    <text evidence="1">Heterotetramer of two alpha chains (FadB) and two beta chains (FadA).</text>
</comment>
<comment type="subcellular location">
    <subcellularLocation>
        <location evidence="1">Cytoplasm</location>
    </subcellularLocation>
</comment>
<comment type="similarity">
    <text evidence="1">Belongs to the thiolase-like superfamily. Thiolase family.</text>
</comment>
<organism>
    <name type="scientific">Klebsiella pneumoniae subsp. pneumoniae (strain ATCC 700721 / MGH 78578)</name>
    <dbReference type="NCBI Taxonomy" id="272620"/>
    <lineage>
        <taxon>Bacteria</taxon>
        <taxon>Pseudomonadati</taxon>
        <taxon>Pseudomonadota</taxon>
        <taxon>Gammaproteobacteria</taxon>
        <taxon>Enterobacterales</taxon>
        <taxon>Enterobacteriaceae</taxon>
        <taxon>Klebsiella/Raoultella group</taxon>
        <taxon>Klebsiella</taxon>
        <taxon>Klebsiella pneumoniae complex</taxon>
    </lineage>
</organism>
<accession>A6TGM3</accession>
<name>FADA_KLEP7</name>
<keyword id="KW-0012">Acyltransferase</keyword>
<keyword id="KW-0963">Cytoplasm</keyword>
<keyword id="KW-0276">Fatty acid metabolism</keyword>
<keyword id="KW-0442">Lipid degradation</keyword>
<keyword id="KW-0443">Lipid metabolism</keyword>
<keyword id="KW-0808">Transferase</keyword>
<sequence>MEQVVIVDAIRTPMGRSKGGAFRHVRAEDLSAHLMRSLLSRNPSLEASAIDDIYWGCVQQTLEQGFNIARNAALLAEIPHSVPANTVNRLCGSSMQALHDAARMIMTGDAGVCLIGGVEHMGHVPMSHGVDFHPGLSRNVAKAAGMMGLTAEMLARLHGISREMQDQFAARSHARAWAATQSGAFKAEIIPTGGHDADGVLKSFNYDEVIRPETTVETLSTLKPAFDPVTGTVTAGTSSALSDGAAAMLLMSESRARELGLKPRARVRSMAVVGCDPSIMGYGPVPASKLALKKAGLSTSDIDVFEMNEAFAAQILPCIKDLGLMEQIDEKINLNGGAIALGHPLGCSGARISTTLINQMERKDAQFGLATMCIGLGQGIATVFERV</sequence>
<feature type="chain" id="PRO_0000323547" description="3-ketoacyl-CoA thiolase">
    <location>
        <begin position="1"/>
        <end position="387"/>
    </location>
</feature>
<feature type="active site" description="Acyl-thioester intermediate" evidence="1">
    <location>
        <position position="91"/>
    </location>
</feature>
<feature type="active site" description="Proton acceptor" evidence="1">
    <location>
        <position position="343"/>
    </location>
</feature>
<feature type="active site" description="Proton acceptor" evidence="1">
    <location>
        <position position="373"/>
    </location>
</feature>
<protein>
    <recommendedName>
        <fullName evidence="1">3-ketoacyl-CoA thiolase</fullName>
        <ecNumber evidence="1">2.3.1.16</ecNumber>
    </recommendedName>
    <alternativeName>
        <fullName evidence="1">Acetyl-CoA acyltransferase</fullName>
    </alternativeName>
    <alternativeName>
        <fullName evidence="1">Beta-ketothiolase</fullName>
    </alternativeName>
    <alternativeName>
        <fullName evidence="1">Fatty acid oxidation complex subunit beta</fullName>
    </alternativeName>
</protein>
<reference key="1">
    <citation type="submission" date="2006-09" db="EMBL/GenBank/DDBJ databases">
        <authorList>
            <consortium name="The Klebsiella pneumonia Genome Sequencing Project"/>
            <person name="McClelland M."/>
            <person name="Sanderson E.K."/>
            <person name="Spieth J."/>
            <person name="Clifton W.S."/>
            <person name="Latreille P."/>
            <person name="Sabo A."/>
            <person name="Pepin K."/>
            <person name="Bhonagiri V."/>
            <person name="Porwollik S."/>
            <person name="Ali J."/>
            <person name="Wilson R.K."/>
        </authorList>
    </citation>
    <scope>NUCLEOTIDE SEQUENCE [LARGE SCALE GENOMIC DNA]</scope>
    <source>
        <strain>ATCC 700721 / MGH 78578</strain>
    </source>
</reference>
<evidence type="ECO:0000255" key="1">
    <source>
        <dbReference type="HAMAP-Rule" id="MF_01620"/>
    </source>
</evidence>
<proteinExistence type="inferred from homology"/>
<dbReference type="EC" id="2.3.1.16" evidence="1"/>
<dbReference type="EMBL" id="CP000647">
    <property type="protein sequence ID" value="ABR79707.1"/>
    <property type="molecule type" value="Genomic_DNA"/>
</dbReference>
<dbReference type="RefSeq" id="WP_015959234.1">
    <property type="nucleotide sequence ID" value="NC_009648.1"/>
</dbReference>
<dbReference type="SMR" id="A6TGM3"/>
<dbReference type="STRING" id="272620.KPN_04339"/>
<dbReference type="PaxDb" id="272620-KPN_04339"/>
<dbReference type="EnsemblBacteria" id="ABR79707">
    <property type="protein sequence ID" value="ABR79707"/>
    <property type="gene ID" value="KPN_04339"/>
</dbReference>
<dbReference type="KEGG" id="kpn:KPN_04339"/>
<dbReference type="HOGENOM" id="CLU_031026_2_3_6"/>
<dbReference type="UniPathway" id="UPA00659"/>
<dbReference type="Proteomes" id="UP000000265">
    <property type="component" value="Chromosome"/>
</dbReference>
<dbReference type="GO" id="GO:0005737">
    <property type="term" value="C:cytoplasm"/>
    <property type="evidence" value="ECO:0007669"/>
    <property type="project" value="UniProtKB-SubCell"/>
</dbReference>
<dbReference type="GO" id="GO:0003988">
    <property type="term" value="F:acetyl-CoA C-acyltransferase activity"/>
    <property type="evidence" value="ECO:0007669"/>
    <property type="project" value="UniProtKB-UniRule"/>
</dbReference>
<dbReference type="GO" id="GO:0006635">
    <property type="term" value="P:fatty acid beta-oxidation"/>
    <property type="evidence" value="ECO:0007669"/>
    <property type="project" value="UniProtKB-UniRule"/>
</dbReference>
<dbReference type="GO" id="GO:0010124">
    <property type="term" value="P:phenylacetate catabolic process"/>
    <property type="evidence" value="ECO:0007669"/>
    <property type="project" value="TreeGrafter"/>
</dbReference>
<dbReference type="CDD" id="cd00751">
    <property type="entry name" value="thiolase"/>
    <property type="match status" value="1"/>
</dbReference>
<dbReference type="FunFam" id="3.40.47.10:FF:000010">
    <property type="entry name" value="Acetyl-CoA acetyltransferase (Thiolase)"/>
    <property type="match status" value="1"/>
</dbReference>
<dbReference type="Gene3D" id="3.40.47.10">
    <property type="match status" value="2"/>
</dbReference>
<dbReference type="HAMAP" id="MF_01620">
    <property type="entry name" value="FadA"/>
    <property type="match status" value="1"/>
</dbReference>
<dbReference type="InterPro" id="IPR012805">
    <property type="entry name" value="FadA"/>
</dbReference>
<dbReference type="InterPro" id="IPR002155">
    <property type="entry name" value="Thiolase"/>
</dbReference>
<dbReference type="InterPro" id="IPR016039">
    <property type="entry name" value="Thiolase-like"/>
</dbReference>
<dbReference type="InterPro" id="IPR050215">
    <property type="entry name" value="Thiolase-like_sf_Thiolase"/>
</dbReference>
<dbReference type="InterPro" id="IPR020615">
    <property type="entry name" value="Thiolase_acyl_enz_int_AS"/>
</dbReference>
<dbReference type="InterPro" id="IPR020610">
    <property type="entry name" value="Thiolase_AS"/>
</dbReference>
<dbReference type="InterPro" id="IPR020617">
    <property type="entry name" value="Thiolase_C"/>
</dbReference>
<dbReference type="InterPro" id="IPR020613">
    <property type="entry name" value="Thiolase_CS"/>
</dbReference>
<dbReference type="InterPro" id="IPR020616">
    <property type="entry name" value="Thiolase_N"/>
</dbReference>
<dbReference type="NCBIfam" id="TIGR01930">
    <property type="entry name" value="AcCoA-C-Actrans"/>
    <property type="match status" value="1"/>
</dbReference>
<dbReference type="NCBIfam" id="TIGR02445">
    <property type="entry name" value="fadA"/>
    <property type="match status" value="1"/>
</dbReference>
<dbReference type="NCBIfam" id="NF006510">
    <property type="entry name" value="PRK08947.1"/>
    <property type="match status" value="1"/>
</dbReference>
<dbReference type="PANTHER" id="PTHR43853:SF11">
    <property type="entry name" value="3-KETOACYL-COA THIOLASE FADA"/>
    <property type="match status" value="1"/>
</dbReference>
<dbReference type="PANTHER" id="PTHR43853">
    <property type="entry name" value="3-KETOACYL-COA THIOLASE, PEROXISOMAL"/>
    <property type="match status" value="1"/>
</dbReference>
<dbReference type="Pfam" id="PF02803">
    <property type="entry name" value="Thiolase_C"/>
    <property type="match status" value="1"/>
</dbReference>
<dbReference type="Pfam" id="PF00108">
    <property type="entry name" value="Thiolase_N"/>
    <property type="match status" value="1"/>
</dbReference>
<dbReference type="PIRSF" id="PIRSF000429">
    <property type="entry name" value="Ac-CoA_Ac_transf"/>
    <property type="match status" value="1"/>
</dbReference>
<dbReference type="SUPFAM" id="SSF53901">
    <property type="entry name" value="Thiolase-like"/>
    <property type="match status" value="2"/>
</dbReference>
<dbReference type="PROSITE" id="PS00098">
    <property type="entry name" value="THIOLASE_1"/>
    <property type="match status" value="1"/>
</dbReference>
<dbReference type="PROSITE" id="PS00737">
    <property type="entry name" value="THIOLASE_2"/>
    <property type="match status" value="1"/>
</dbReference>
<dbReference type="PROSITE" id="PS00099">
    <property type="entry name" value="THIOLASE_3"/>
    <property type="match status" value="1"/>
</dbReference>